<feature type="chain" id="PRO_0000410268" description="Pre-mRNA-splicing factor CWC2">
    <location>
        <begin position="1"/>
        <end position="342"/>
    </location>
</feature>
<feature type="domain" description="RRM" evidence="2">
    <location>
        <begin position="141"/>
        <end position="218"/>
    </location>
</feature>
<feature type="zinc finger region" description="C3H1-type" evidence="3">
    <location>
        <begin position="77"/>
        <end position="104"/>
    </location>
</feature>
<feature type="region of interest" description="Disordered" evidence="4">
    <location>
        <begin position="1"/>
        <end position="27"/>
    </location>
</feature>
<feature type="region of interest" description="Disordered" evidence="4">
    <location>
        <begin position="270"/>
        <end position="292"/>
    </location>
</feature>
<feature type="compositionally biased region" description="Basic and acidic residues" evidence="4">
    <location>
        <begin position="270"/>
        <end position="288"/>
    </location>
</feature>
<protein>
    <recommendedName>
        <fullName>Pre-mRNA-splicing factor CWC2</fullName>
    </recommendedName>
</protein>
<dbReference type="EMBL" id="AAEY01000042">
    <property type="protein sequence ID" value="EAL19159.1"/>
    <property type="molecule type" value="Genomic_DNA"/>
</dbReference>
<dbReference type="RefSeq" id="XP_773806.1">
    <property type="nucleotide sequence ID" value="XM_768713.1"/>
</dbReference>
<dbReference type="SMR" id="P0CR15"/>
<dbReference type="EnsemblFungi" id="AAW45373">
    <property type="protein sequence ID" value="AAW45373"/>
    <property type="gene ID" value="CNI02720"/>
</dbReference>
<dbReference type="GeneID" id="4937781"/>
<dbReference type="KEGG" id="cnb:CNBH2580"/>
<dbReference type="VEuPathDB" id="FungiDB:CNBH2580"/>
<dbReference type="HOGENOM" id="CLU_043308_1_1_1"/>
<dbReference type="OrthoDB" id="2884at5206"/>
<dbReference type="GO" id="GO:0071014">
    <property type="term" value="C:post-mRNA release spliceosomal complex"/>
    <property type="evidence" value="ECO:0007669"/>
    <property type="project" value="EnsemblFungi"/>
</dbReference>
<dbReference type="GO" id="GO:0000974">
    <property type="term" value="C:Prp19 complex"/>
    <property type="evidence" value="ECO:0000250"/>
    <property type="project" value="UniProtKB"/>
</dbReference>
<dbReference type="GO" id="GO:0071006">
    <property type="term" value="C:U2-type catalytic step 1 spliceosome"/>
    <property type="evidence" value="ECO:0007669"/>
    <property type="project" value="TreeGrafter"/>
</dbReference>
<dbReference type="GO" id="GO:0071007">
    <property type="term" value="C:U2-type catalytic step 2 spliceosome"/>
    <property type="evidence" value="ECO:0007669"/>
    <property type="project" value="TreeGrafter"/>
</dbReference>
<dbReference type="GO" id="GO:0036002">
    <property type="term" value="F:pre-mRNA binding"/>
    <property type="evidence" value="ECO:0000250"/>
    <property type="project" value="UniProtKB"/>
</dbReference>
<dbReference type="GO" id="GO:0017070">
    <property type="term" value="F:U6 snRNA binding"/>
    <property type="evidence" value="ECO:0000250"/>
    <property type="project" value="UniProtKB"/>
</dbReference>
<dbReference type="GO" id="GO:0008270">
    <property type="term" value="F:zinc ion binding"/>
    <property type="evidence" value="ECO:0007669"/>
    <property type="project" value="UniProtKB-KW"/>
</dbReference>
<dbReference type="GO" id="GO:0045292">
    <property type="term" value="P:mRNA cis splicing, via spliceosome"/>
    <property type="evidence" value="ECO:0000250"/>
    <property type="project" value="UniProtKB"/>
</dbReference>
<dbReference type="GO" id="GO:0045787">
    <property type="term" value="P:positive regulation of cell cycle"/>
    <property type="evidence" value="ECO:0000250"/>
    <property type="project" value="UniProtKB"/>
</dbReference>
<dbReference type="GO" id="GO:0033120">
    <property type="term" value="P:positive regulation of RNA splicing"/>
    <property type="evidence" value="ECO:0000250"/>
    <property type="project" value="UniProtKB"/>
</dbReference>
<dbReference type="GO" id="GO:0000387">
    <property type="term" value="P:spliceosomal snRNP assembly"/>
    <property type="evidence" value="ECO:0000250"/>
    <property type="project" value="UniProtKB"/>
</dbReference>
<dbReference type="CDD" id="cd12360">
    <property type="entry name" value="RRM_cwf2"/>
    <property type="match status" value="1"/>
</dbReference>
<dbReference type="FunFam" id="3.30.70.330:FF:000249">
    <property type="entry name" value="Pre-mRNA-splicing factor CWC2, variant"/>
    <property type="match status" value="1"/>
</dbReference>
<dbReference type="Gene3D" id="3.30.70.330">
    <property type="match status" value="1"/>
</dbReference>
<dbReference type="InterPro" id="IPR039171">
    <property type="entry name" value="Cwc2/Slt11"/>
</dbReference>
<dbReference type="InterPro" id="IPR034181">
    <property type="entry name" value="Cwc2_RRM"/>
</dbReference>
<dbReference type="InterPro" id="IPR012677">
    <property type="entry name" value="Nucleotide-bd_a/b_plait_sf"/>
</dbReference>
<dbReference type="InterPro" id="IPR035979">
    <property type="entry name" value="RBD_domain_sf"/>
</dbReference>
<dbReference type="InterPro" id="IPR000504">
    <property type="entry name" value="RRM_dom"/>
</dbReference>
<dbReference type="InterPro" id="IPR032297">
    <property type="entry name" value="Torus"/>
</dbReference>
<dbReference type="InterPro" id="IPR000571">
    <property type="entry name" value="Znf_CCCH"/>
</dbReference>
<dbReference type="PANTHER" id="PTHR14089:SF2">
    <property type="entry name" value="PRE-MRNA-SPLICING FACTOR CWC2"/>
    <property type="match status" value="1"/>
</dbReference>
<dbReference type="PANTHER" id="PTHR14089">
    <property type="entry name" value="PRE-MRNA-SPLICING FACTOR RBM22"/>
    <property type="match status" value="1"/>
</dbReference>
<dbReference type="Pfam" id="PF00076">
    <property type="entry name" value="RRM_1"/>
    <property type="match status" value="1"/>
</dbReference>
<dbReference type="Pfam" id="PF16131">
    <property type="entry name" value="Torus"/>
    <property type="match status" value="1"/>
</dbReference>
<dbReference type="SMART" id="SM00360">
    <property type="entry name" value="RRM"/>
    <property type="match status" value="1"/>
</dbReference>
<dbReference type="SUPFAM" id="SSF54928">
    <property type="entry name" value="RNA-binding domain, RBD"/>
    <property type="match status" value="1"/>
</dbReference>
<dbReference type="PROSITE" id="PS50102">
    <property type="entry name" value="RRM"/>
    <property type="match status" value="1"/>
</dbReference>
<dbReference type="PROSITE" id="PS50103">
    <property type="entry name" value="ZF_C3H1"/>
    <property type="match status" value="1"/>
</dbReference>
<name>CWC2_CRYNB</name>
<evidence type="ECO:0000250" key="1"/>
<evidence type="ECO:0000255" key="2">
    <source>
        <dbReference type="PROSITE-ProRule" id="PRU00176"/>
    </source>
</evidence>
<evidence type="ECO:0000255" key="3">
    <source>
        <dbReference type="PROSITE-ProRule" id="PRU00723"/>
    </source>
</evidence>
<evidence type="ECO:0000256" key="4">
    <source>
        <dbReference type="SAM" id="MobiDB-lite"/>
    </source>
</evidence>
<evidence type="ECO:0000305" key="5"/>
<gene>
    <name type="primary">CWC2</name>
    <name type="ordered locus">CNBH2580</name>
</gene>
<accession>P0CR15</accession>
<accession>Q55N26</accession>
<accession>Q5KBF5</accession>
<proteinExistence type="inferred from homology"/>
<sequence length="342" mass="38515">MSSDNTVAPKRKLKPARKQVASDEVDKSQGYQAGREYNIWYNKWAGGDREDALASKVHSQTRCIISRDAGYTRADATGNKYCCLFFARGCCPYGYECQYLHRLPLPSHQLPDNSRDCFGREKHADYRDDMGGVGSFNRQNRTLYIGKIQESPDKKQMTETLLRHFGEWGKIVKYNILFGRGVAFVTYETDHQASFAKEAMANQSMDGDEILNVRWATEDPNPGEKVAEEKRIEEIGQKAIAGMLDENLVEATQAVRALEDGDVEDFYHIETSKPEEEEENRPAKKGKSEGGFFNADALDNIKFYAELAKKQAEEEKEKARKVPAKQVGMSLLGGYGSGDESD</sequence>
<keyword id="KW-0131">Cell cycle</keyword>
<keyword id="KW-0479">Metal-binding</keyword>
<keyword id="KW-0507">mRNA processing</keyword>
<keyword id="KW-0508">mRNA splicing</keyword>
<keyword id="KW-0539">Nucleus</keyword>
<keyword id="KW-0694">RNA-binding</keyword>
<keyword id="KW-0747">Spliceosome</keyword>
<keyword id="KW-0862">Zinc</keyword>
<keyword id="KW-0863">Zinc-finger</keyword>
<comment type="function">
    <text evidence="1">Involved in the first step of pre-mRNA splicing. Required for cell growth and cell cycle control. Plays a role in the levels of the U1, U4, U5 and U6 snRNAs and the maintenance of the U4/U6 snRNA complex. May provide the link between the 'nineteen complex' NTC spliceosome protein complex and the spliceosome through the U6 snRNA. Associates predominantly with U6 snRNAs in assembled active spliceosomes. Binds directly to the internal stem-loop (ISL) domain of the U6 snRNA and to the pre-mRNA intron near the 5' splice site during the activation and catalytic phases of the spliceosome cycle (By similarity).</text>
</comment>
<comment type="subunit">
    <text evidence="1">Associated with the spliceosome.</text>
</comment>
<comment type="subcellular location">
    <subcellularLocation>
        <location evidence="1">Nucleus</location>
    </subcellularLocation>
</comment>
<comment type="domain">
    <text evidence="1">The C-terminal RRM domain and the zinc finger motif are necessary for RNA-binding.</text>
</comment>
<comment type="similarity">
    <text evidence="5">Belongs to the RRM CWC2 family.</text>
</comment>
<organism>
    <name type="scientific">Cryptococcus neoformans var. neoformans serotype D (strain B-3501A)</name>
    <name type="common">Filobasidiella neoformans</name>
    <dbReference type="NCBI Taxonomy" id="283643"/>
    <lineage>
        <taxon>Eukaryota</taxon>
        <taxon>Fungi</taxon>
        <taxon>Dikarya</taxon>
        <taxon>Basidiomycota</taxon>
        <taxon>Agaricomycotina</taxon>
        <taxon>Tremellomycetes</taxon>
        <taxon>Tremellales</taxon>
        <taxon>Cryptococcaceae</taxon>
        <taxon>Cryptococcus</taxon>
        <taxon>Cryptococcus neoformans species complex</taxon>
    </lineage>
</organism>
<reference key="1">
    <citation type="journal article" date="2005" name="Science">
        <title>The genome of the basidiomycetous yeast and human pathogen Cryptococcus neoformans.</title>
        <authorList>
            <person name="Loftus B.J."/>
            <person name="Fung E."/>
            <person name="Roncaglia P."/>
            <person name="Rowley D."/>
            <person name="Amedeo P."/>
            <person name="Bruno D."/>
            <person name="Vamathevan J."/>
            <person name="Miranda M."/>
            <person name="Anderson I.J."/>
            <person name="Fraser J.A."/>
            <person name="Allen J.E."/>
            <person name="Bosdet I.E."/>
            <person name="Brent M.R."/>
            <person name="Chiu R."/>
            <person name="Doering T.L."/>
            <person name="Donlin M.J."/>
            <person name="D'Souza C.A."/>
            <person name="Fox D.S."/>
            <person name="Grinberg V."/>
            <person name="Fu J."/>
            <person name="Fukushima M."/>
            <person name="Haas B.J."/>
            <person name="Huang J.C."/>
            <person name="Janbon G."/>
            <person name="Jones S.J.M."/>
            <person name="Koo H.L."/>
            <person name="Krzywinski M.I."/>
            <person name="Kwon-Chung K.J."/>
            <person name="Lengeler K.B."/>
            <person name="Maiti R."/>
            <person name="Marra M.A."/>
            <person name="Marra R.E."/>
            <person name="Mathewson C.A."/>
            <person name="Mitchell T.G."/>
            <person name="Pertea M."/>
            <person name="Riggs F.R."/>
            <person name="Salzberg S.L."/>
            <person name="Schein J.E."/>
            <person name="Shvartsbeyn A."/>
            <person name="Shin H."/>
            <person name="Shumway M."/>
            <person name="Specht C.A."/>
            <person name="Suh B.B."/>
            <person name="Tenney A."/>
            <person name="Utterback T.R."/>
            <person name="Wickes B.L."/>
            <person name="Wortman J.R."/>
            <person name="Wye N.H."/>
            <person name="Kronstad J.W."/>
            <person name="Lodge J.K."/>
            <person name="Heitman J."/>
            <person name="Davis R.W."/>
            <person name="Fraser C.M."/>
            <person name="Hyman R.W."/>
        </authorList>
    </citation>
    <scope>NUCLEOTIDE SEQUENCE [LARGE SCALE GENOMIC DNA]</scope>
    <source>
        <strain>B-3501A</strain>
    </source>
</reference>